<organism>
    <name type="scientific">Salmonella agona (strain SL483)</name>
    <dbReference type="NCBI Taxonomy" id="454166"/>
    <lineage>
        <taxon>Bacteria</taxon>
        <taxon>Pseudomonadati</taxon>
        <taxon>Pseudomonadota</taxon>
        <taxon>Gammaproteobacteria</taxon>
        <taxon>Enterobacterales</taxon>
        <taxon>Enterobacteriaceae</taxon>
        <taxon>Salmonella</taxon>
    </lineage>
</organism>
<proteinExistence type="inferred from homology"/>
<feature type="chain" id="PRO_1000131888" description="4-deoxy-L-threo-5-hexosulose-uronate ketol-isomerase">
    <location>
        <begin position="1"/>
        <end position="278"/>
    </location>
</feature>
<feature type="binding site" evidence="1">
    <location>
        <position position="196"/>
    </location>
    <ligand>
        <name>Zn(2+)</name>
        <dbReference type="ChEBI" id="CHEBI:29105"/>
    </ligand>
</feature>
<feature type="binding site" evidence="1">
    <location>
        <position position="198"/>
    </location>
    <ligand>
        <name>Zn(2+)</name>
        <dbReference type="ChEBI" id="CHEBI:29105"/>
    </ligand>
</feature>
<feature type="binding site" evidence="1">
    <location>
        <position position="203"/>
    </location>
    <ligand>
        <name>Zn(2+)</name>
        <dbReference type="ChEBI" id="CHEBI:29105"/>
    </ligand>
</feature>
<feature type="binding site" evidence="1">
    <location>
        <position position="245"/>
    </location>
    <ligand>
        <name>Zn(2+)</name>
        <dbReference type="ChEBI" id="CHEBI:29105"/>
    </ligand>
</feature>
<sequence length="278" mass="31215">MDVRQSIHSEHAKTLDTQALRREFLIENIFVADEYTMVYSHIDRIIVGGIMPVSHPVEIGGEVGKQLGVSRLLDRRELGVINIGGAGAIIVDGQRHDIGHRDALYIGKGAKELVFVSNEASRPAKFYYNCAPAHTAYPTKKVSPADVAPVTLGDNLTSNRRTINKYFVPDVLETCQLSMGLTELAPGNLWNTMPCHTHERRMEVYLYFNMEEDSCVFHMMGQPQETRHIVMRNEQAVISPSWSIHSGVGTKAYTFIWGMVGENQVFDDMDHVAVQDLR</sequence>
<accession>B5F4W4</accession>
<comment type="function">
    <text evidence="1">Catalyzes the isomerization of 5-dehydro-4-deoxy-D-glucuronate to 3-deoxy-D-glycero-2,5-hexodiulosonate.</text>
</comment>
<comment type="catalytic activity">
    <reaction evidence="1">
        <text>5-dehydro-4-deoxy-D-glucuronate = 3-deoxy-D-glycero-2,5-hexodiulosonate</text>
        <dbReference type="Rhea" id="RHEA:23896"/>
        <dbReference type="ChEBI" id="CHEBI:17117"/>
        <dbReference type="ChEBI" id="CHEBI:29071"/>
        <dbReference type="EC" id="5.3.1.17"/>
    </reaction>
</comment>
<comment type="cofactor">
    <cofactor evidence="1">
        <name>Zn(2+)</name>
        <dbReference type="ChEBI" id="CHEBI:29105"/>
    </cofactor>
    <text evidence="1">Binds 1 zinc ion per subunit.</text>
</comment>
<comment type="pathway">
    <text evidence="1">Glycan metabolism; pectin degradation; 2-dehydro-3-deoxy-D-gluconate from pectin: step 4/5.</text>
</comment>
<comment type="similarity">
    <text evidence="1">Belongs to the KduI family.</text>
</comment>
<name>KDUI_SALA4</name>
<evidence type="ECO:0000255" key="1">
    <source>
        <dbReference type="HAMAP-Rule" id="MF_00687"/>
    </source>
</evidence>
<keyword id="KW-0413">Isomerase</keyword>
<keyword id="KW-0479">Metal-binding</keyword>
<keyword id="KW-0862">Zinc</keyword>
<gene>
    <name evidence="1" type="primary">kduI</name>
    <name type="ordered locus">SeAg_B3169</name>
</gene>
<reference key="1">
    <citation type="journal article" date="2011" name="J. Bacteriol.">
        <title>Comparative genomics of 28 Salmonella enterica isolates: evidence for CRISPR-mediated adaptive sublineage evolution.</title>
        <authorList>
            <person name="Fricke W.F."/>
            <person name="Mammel M.K."/>
            <person name="McDermott P.F."/>
            <person name="Tartera C."/>
            <person name="White D.G."/>
            <person name="Leclerc J.E."/>
            <person name="Ravel J."/>
            <person name="Cebula T.A."/>
        </authorList>
    </citation>
    <scope>NUCLEOTIDE SEQUENCE [LARGE SCALE GENOMIC DNA]</scope>
    <source>
        <strain>SL483</strain>
    </source>
</reference>
<dbReference type="EC" id="5.3.1.17" evidence="1"/>
<dbReference type="EMBL" id="CP001138">
    <property type="protein sequence ID" value="ACH52883.1"/>
    <property type="molecule type" value="Genomic_DNA"/>
</dbReference>
<dbReference type="RefSeq" id="WP_000383270.1">
    <property type="nucleotide sequence ID" value="NC_011149.1"/>
</dbReference>
<dbReference type="SMR" id="B5F4W4"/>
<dbReference type="KEGG" id="sea:SeAg_B3169"/>
<dbReference type="HOGENOM" id="CLU_062609_0_0_6"/>
<dbReference type="UniPathway" id="UPA00545">
    <property type="reaction ID" value="UER00826"/>
</dbReference>
<dbReference type="Proteomes" id="UP000008819">
    <property type="component" value="Chromosome"/>
</dbReference>
<dbReference type="GO" id="GO:0008697">
    <property type="term" value="F:4-deoxy-L-threo-5-hexosulose-uronate ketol-isomerase activity"/>
    <property type="evidence" value="ECO:0007669"/>
    <property type="project" value="UniProtKB-UniRule"/>
</dbReference>
<dbReference type="GO" id="GO:0008270">
    <property type="term" value="F:zinc ion binding"/>
    <property type="evidence" value="ECO:0007669"/>
    <property type="project" value="UniProtKB-UniRule"/>
</dbReference>
<dbReference type="GO" id="GO:0019698">
    <property type="term" value="P:D-galacturonate catabolic process"/>
    <property type="evidence" value="ECO:0007669"/>
    <property type="project" value="TreeGrafter"/>
</dbReference>
<dbReference type="GO" id="GO:0042840">
    <property type="term" value="P:D-glucuronate catabolic process"/>
    <property type="evidence" value="ECO:0007669"/>
    <property type="project" value="TreeGrafter"/>
</dbReference>
<dbReference type="GO" id="GO:0045490">
    <property type="term" value="P:pectin catabolic process"/>
    <property type="evidence" value="ECO:0007669"/>
    <property type="project" value="UniProtKB-UniRule"/>
</dbReference>
<dbReference type="CDD" id="cd20491">
    <property type="entry name" value="cupin_KduI_C"/>
    <property type="match status" value="1"/>
</dbReference>
<dbReference type="CDD" id="cd20294">
    <property type="entry name" value="cupin_KduI_N"/>
    <property type="match status" value="1"/>
</dbReference>
<dbReference type="FunFam" id="2.60.120.10:FF:000018">
    <property type="entry name" value="4-deoxy-L-threo-5-hexosulose-uronate ketol-isomerase"/>
    <property type="match status" value="1"/>
</dbReference>
<dbReference type="FunFam" id="2.60.120.520:FF:000001">
    <property type="entry name" value="4-deoxy-L-threo-5-hexosulose-uronate ketol-isomerase"/>
    <property type="match status" value="1"/>
</dbReference>
<dbReference type="Gene3D" id="2.60.120.10">
    <property type="entry name" value="Jelly Rolls"/>
    <property type="match status" value="1"/>
</dbReference>
<dbReference type="Gene3D" id="2.60.120.520">
    <property type="entry name" value="pectin degrading enzyme 5-keto 4- deoxyuronate isomerase, domain 1"/>
    <property type="match status" value="1"/>
</dbReference>
<dbReference type="HAMAP" id="MF_00687">
    <property type="entry name" value="KduI"/>
    <property type="match status" value="1"/>
</dbReference>
<dbReference type="InterPro" id="IPR007045">
    <property type="entry name" value="KduI"/>
</dbReference>
<dbReference type="InterPro" id="IPR021120">
    <property type="entry name" value="KduI/IolB_isomerase"/>
</dbReference>
<dbReference type="InterPro" id="IPR027449">
    <property type="entry name" value="KduI_N"/>
</dbReference>
<dbReference type="InterPro" id="IPR014710">
    <property type="entry name" value="RmlC-like_jellyroll"/>
</dbReference>
<dbReference type="InterPro" id="IPR011051">
    <property type="entry name" value="RmlC_Cupin_sf"/>
</dbReference>
<dbReference type="NCBIfam" id="NF002091">
    <property type="entry name" value="PRK00924.1"/>
    <property type="match status" value="1"/>
</dbReference>
<dbReference type="PANTHER" id="PTHR38461">
    <property type="entry name" value="4-DEOXY-L-THREO-5-HEXOSULOSE-URONATE KETOL-ISOMERASE"/>
    <property type="match status" value="1"/>
</dbReference>
<dbReference type="PANTHER" id="PTHR38461:SF1">
    <property type="entry name" value="4-DEOXY-L-THREO-5-HEXOSULOSE-URONATE KETOL-ISOMERASE"/>
    <property type="match status" value="1"/>
</dbReference>
<dbReference type="Pfam" id="PF04962">
    <property type="entry name" value="KduI"/>
    <property type="match status" value="1"/>
</dbReference>
<dbReference type="PIRSF" id="PIRSF006625">
    <property type="entry name" value="KduI"/>
    <property type="match status" value="1"/>
</dbReference>
<dbReference type="SUPFAM" id="SSF51182">
    <property type="entry name" value="RmlC-like cupins"/>
    <property type="match status" value="1"/>
</dbReference>
<protein>
    <recommendedName>
        <fullName evidence="1">4-deoxy-L-threo-5-hexosulose-uronate ketol-isomerase</fullName>
        <ecNumber evidence="1">5.3.1.17</ecNumber>
    </recommendedName>
    <alternativeName>
        <fullName evidence="1">5-keto-4-deoxyuronate isomerase</fullName>
    </alternativeName>
    <alternativeName>
        <fullName evidence="1">DKI isomerase</fullName>
    </alternativeName>
</protein>